<protein>
    <recommendedName>
        <fullName>UAP56-interacting factor</fullName>
    </recommendedName>
    <alternativeName>
        <fullName>Forty-two-three domain-containing protein 1</fullName>
        <shortName>Protein 40-2-3</shortName>
    </alternativeName>
</protein>
<comment type="function">
    <text evidence="7">Required for mRNA export from the nucleus to the cytoplasm. Acts as an adapter that uses the DDX39B/UAP56-NFX1 pathway to ensure efficient mRNA export and delivering to the nuclear pore. Associates with spliced and unspliced mRNAs simultaneously with ALYREF/THOC4.</text>
</comment>
<comment type="subunit">
    <text evidence="1 7">Interacts with CHTOP (By similarity). Interacts with DDX39B/UAP56 and NXF1; interaction with DDX39B/UAP56 and NXF1 are mutually exclusive. Interacts with SSRP1; required for its recruitment to mRNAs.</text>
</comment>
<comment type="interaction">
    <interactant intactId="EBI-724553">
        <id>Q96QD9</id>
    </interactant>
    <interactant intactId="EBI-348622">
        <id>Q13838</id>
        <label>DDX39B</label>
    </interactant>
    <organismsDiffer>false</organismsDiffer>
    <experiments>5</experiments>
</comment>
<comment type="interaction">
    <interactant intactId="EBI-724553">
        <id>Q96QD9</id>
    </interactant>
    <interactant intactId="EBI-357966">
        <id>P07910</id>
        <label>HNRNPC</label>
    </interactant>
    <organismsDiffer>false</organismsDiffer>
    <experiments>2</experiments>
</comment>
<comment type="interaction">
    <interactant intactId="EBI-724553">
        <id>Q96QD9</id>
    </interactant>
    <interactant intactId="EBI-6884751">
        <id>Q2HR75</id>
        <label>ORF57</label>
    </interactant>
    <organismsDiffer>true</organismsDiffer>
    <experiments>9</experiments>
</comment>
<comment type="subcellular location">
    <subcellularLocation>
        <location evidence="7">Nucleus</location>
        <location evidence="7">Nucleoplasm</location>
    </subcellularLocation>
    <subcellularLocation>
        <location evidence="7">Nucleus speckle</location>
    </subcellularLocation>
</comment>
<comment type="alternative products">
    <event type="alternative splicing"/>
    <isoform>
        <id>Q96QD9-1</id>
        <name>1</name>
        <sequence type="displayed"/>
    </isoform>
    <isoform>
        <id>Q96QD9-2</id>
        <name>2</name>
        <sequence type="described" ref="VSP_038659"/>
    </isoform>
    <isoform>
        <id>Q96QD9-3</id>
        <name>3</name>
        <sequence type="described" ref="VSP_038658"/>
    </isoform>
    <isoform>
        <id>Q96QD9-4</id>
        <name>4</name>
        <sequence type="described" ref="VSP_038660 VSP_038661"/>
    </isoform>
</comment>
<comment type="tissue specificity">
    <text evidence="8">Expressed in a wide variety of cancer types.</text>
</comment>
<comment type="similarity">
    <text evidence="11">Belongs to the UIF family.</text>
</comment>
<accession>Q96QD9</accession>
<accession>A8MY74</accession>
<accession>B2RCB2</accession>
<accession>B7Z3R4</accession>
<accession>B7Z7V1</accession>
<accession>B7Z8I0</accession>
<accession>B7ZAJ3</accession>
<accession>C9J7P6</accession>
<accession>C9JNG6</accession>
<accession>C9JTH3</accession>
<accession>C9JY50</accession>
<accession>Q96SL9</accession>
<accession>Q9BQI8</accession>
<feature type="chain" id="PRO_0000287441" description="UAP56-interacting factor">
    <location>
        <begin position="1"/>
        <end position="318"/>
    </location>
</feature>
<feature type="region of interest" description="Disordered" evidence="3">
    <location>
        <begin position="1"/>
        <end position="25"/>
    </location>
</feature>
<feature type="region of interest" description="Disordered" evidence="3">
    <location>
        <begin position="79"/>
        <end position="100"/>
    </location>
</feature>
<feature type="short sequence motif" description="UAP56-binding motif">
    <location>
        <begin position="26"/>
        <end position="44"/>
    </location>
</feature>
<feature type="compositionally biased region" description="Basic residues" evidence="3">
    <location>
        <begin position="85"/>
        <end position="98"/>
    </location>
</feature>
<feature type="modified residue" description="N-acetylmethionine" evidence="12">
    <location>
        <position position="1"/>
    </location>
</feature>
<feature type="modified residue" description="Phosphothreonine" evidence="2">
    <location>
        <position position="14"/>
    </location>
</feature>
<feature type="modified residue" description="Phosphoserine" evidence="14">
    <location>
        <position position="16"/>
    </location>
</feature>
<feature type="modified residue" description="Phosphoserine" evidence="13">
    <location>
        <position position="23"/>
    </location>
</feature>
<feature type="modified residue" description="Phosphoserine" evidence="14">
    <location>
        <position position="61"/>
    </location>
</feature>
<feature type="modified residue" description="Phosphoserine" evidence="14">
    <location>
        <position position="118"/>
    </location>
</feature>
<feature type="cross-link" description="Glycyl lysine isopeptide (Lys-Gly) (interchain with G-Cter in SUMO1)">
    <location>
        <position position="140"/>
    </location>
</feature>
<feature type="cross-link" description="Glycyl lysine isopeptide (Lys-Gly) (interchain with G-Cter in SUMO2)" evidence="15 16">
    <location>
        <position position="261"/>
    </location>
</feature>
<feature type="splice variant" id="VSP_038658" description="In isoform 3." evidence="10">
    <location>
        <begin position="1"/>
        <end position="67"/>
    </location>
</feature>
<feature type="splice variant" id="VSP_038659" description="In isoform 2." evidence="10">
    <original>MNRFGTRLVGATATSSPPPKARSNENLDKIDMSLD</original>
    <variation>MEPSVIMGN</variation>
    <location>
        <begin position="1"/>
        <end position="35"/>
    </location>
</feature>
<feature type="splice variant" id="VSP_038660" description="In isoform 4." evidence="10">
    <original>N</original>
    <variation>K</variation>
    <location>
        <position position="129"/>
    </location>
</feature>
<feature type="splice variant" id="VSP_038661" description="In isoform 4." evidence="10">
    <location>
        <begin position="130"/>
        <end position="318"/>
    </location>
</feature>
<feature type="sequence variant" id="VAR_062411" description="In dbSNP:rs3205525." evidence="4 5 6 9">
    <original>R</original>
    <variation>H</variation>
    <location>
        <position position="87"/>
    </location>
</feature>
<feature type="sequence conflict" description="In Ref. 3; BAH14679." evidence="11" ref="3">
    <original>N</original>
    <variation>S</variation>
    <location>
        <position position="178"/>
    </location>
</feature>
<feature type="sequence conflict" description="In Ref. 3; BAB55284." evidence="11" ref="3">
    <original>E</original>
    <variation>G</variation>
    <location>
        <position position="263"/>
    </location>
</feature>
<name>UIF_HUMAN</name>
<proteinExistence type="evidence at protein level"/>
<keyword id="KW-0007">Acetylation</keyword>
<keyword id="KW-0025">Alternative splicing</keyword>
<keyword id="KW-1017">Isopeptide bond</keyword>
<keyword id="KW-0509">mRNA transport</keyword>
<keyword id="KW-0539">Nucleus</keyword>
<keyword id="KW-0597">Phosphoprotein</keyword>
<keyword id="KW-1267">Proteomics identification</keyword>
<keyword id="KW-1185">Reference proteome</keyword>
<keyword id="KW-0694">RNA-binding</keyword>
<keyword id="KW-0813">Transport</keyword>
<keyword id="KW-0832">Ubl conjugation</keyword>
<reference key="1">
    <citation type="thesis" date="2001" institute="Faculty of Biological Sciences / Goettingen" country="Germany">
        <authorList>
            <person name="Schmidt T."/>
        </authorList>
    </citation>
    <scope>NUCLEOTIDE SEQUENCE [MRNA] (ISOFORM 1)</scope>
</reference>
<reference key="2">
    <citation type="journal article" date="2001" name="Genome Res.">
        <title>Towards a catalog of human genes and proteins: sequencing and analysis of 500 novel complete protein coding human cDNAs.</title>
        <authorList>
            <person name="Wiemann S."/>
            <person name="Weil B."/>
            <person name="Wellenreuther R."/>
            <person name="Gassenhuber J."/>
            <person name="Glassl S."/>
            <person name="Ansorge W."/>
            <person name="Boecher M."/>
            <person name="Bloecker H."/>
            <person name="Bauersachs S."/>
            <person name="Blum H."/>
            <person name="Lauber J."/>
            <person name="Duesterhoeft A."/>
            <person name="Beyer A."/>
            <person name="Koehrer K."/>
            <person name="Strack N."/>
            <person name="Mewes H.-W."/>
            <person name="Ottenwaelder B."/>
            <person name="Obermaier B."/>
            <person name="Tampe J."/>
            <person name="Heubner D."/>
            <person name="Wambutt R."/>
            <person name="Korn B."/>
            <person name="Klein M."/>
            <person name="Poustka A."/>
        </authorList>
    </citation>
    <scope>NUCLEOTIDE SEQUENCE [LARGE SCALE MRNA] (ISOFORM 1)</scope>
    <scope>VARIANT HIS-87</scope>
    <source>
        <tissue>Amygdala</tissue>
    </source>
</reference>
<reference key="3">
    <citation type="journal article" date="2004" name="Nat. Genet.">
        <title>Complete sequencing and characterization of 21,243 full-length human cDNAs.</title>
        <authorList>
            <person name="Ota T."/>
            <person name="Suzuki Y."/>
            <person name="Nishikawa T."/>
            <person name="Otsuki T."/>
            <person name="Sugiyama T."/>
            <person name="Irie R."/>
            <person name="Wakamatsu A."/>
            <person name="Hayashi K."/>
            <person name="Sato H."/>
            <person name="Nagai K."/>
            <person name="Kimura K."/>
            <person name="Makita H."/>
            <person name="Sekine M."/>
            <person name="Obayashi M."/>
            <person name="Nishi T."/>
            <person name="Shibahara T."/>
            <person name="Tanaka T."/>
            <person name="Ishii S."/>
            <person name="Yamamoto J."/>
            <person name="Saito K."/>
            <person name="Kawai Y."/>
            <person name="Isono Y."/>
            <person name="Nakamura Y."/>
            <person name="Nagahari K."/>
            <person name="Murakami K."/>
            <person name="Yasuda T."/>
            <person name="Iwayanagi T."/>
            <person name="Wagatsuma M."/>
            <person name="Shiratori A."/>
            <person name="Sudo H."/>
            <person name="Hosoiri T."/>
            <person name="Kaku Y."/>
            <person name="Kodaira H."/>
            <person name="Kondo H."/>
            <person name="Sugawara M."/>
            <person name="Takahashi M."/>
            <person name="Kanda K."/>
            <person name="Yokoi T."/>
            <person name="Furuya T."/>
            <person name="Kikkawa E."/>
            <person name="Omura Y."/>
            <person name="Abe K."/>
            <person name="Kamihara K."/>
            <person name="Katsuta N."/>
            <person name="Sato K."/>
            <person name="Tanikawa M."/>
            <person name="Yamazaki M."/>
            <person name="Ninomiya K."/>
            <person name="Ishibashi T."/>
            <person name="Yamashita H."/>
            <person name="Murakawa K."/>
            <person name="Fujimori K."/>
            <person name="Tanai H."/>
            <person name="Kimata M."/>
            <person name="Watanabe M."/>
            <person name="Hiraoka S."/>
            <person name="Chiba Y."/>
            <person name="Ishida S."/>
            <person name="Ono Y."/>
            <person name="Takiguchi S."/>
            <person name="Watanabe S."/>
            <person name="Yosida M."/>
            <person name="Hotuta T."/>
            <person name="Kusano J."/>
            <person name="Kanehori K."/>
            <person name="Takahashi-Fujii A."/>
            <person name="Hara H."/>
            <person name="Tanase T.-O."/>
            <person name="Nomura Y."/>
            <person name="Togiya S."/>
            <person name="Komai F."/>
            <person name="Hara R."/>
            <person name="Takeuchi K."/>
            <person name="Arita M."/>
            <person name="Imose N."/>
            <person name="Musashino K."/>
            <person name="Yuuki H."/>
            <person name="Oshima A."/>
            <person name="Sasaki N."/>
            <person name="Aotsuka S."/>
            <person name="Yoshikawa Y."/>
            <person name="Matsunawa H."/>
            <person name="Ichihara T."/>
            <person name="Shiohata N."/>
            <person name="Sano S."/>
            <person name="Moriya S."/>
            <person name="Momiyama H."/>
            <person name="Satoh N."/>
            <person name="Takami S."/>
            <person name="Terashima Y."/>
            <person name="Suzuki O."/>
            <person name="Nakagawa S."/>
            <person name="Senoh A."/>
            <person name="Mizoguchi H."/>
            <person name="Goto Y."/>
            <person name="Shimizu F."/>
            <person name="Wakebe H."/>
            <person name="Hishigaki H."/>
            <person name="Watanabe T."/>
            <person name="Sugiyama A."/>
            <person name="Takemoto M."/>
            <person name="Kawakami B."/>
            <person name="Yamazaki M."/>
            <person name="Watanabe K."/>
            <person name="Kumagai A."/>
            <person name="Itakura S."/>
            <person name="Fukuzumi Y."/>
            <person name="Fujimori Y."/>
            <person name="Komiyama M."/>
            <person name="Tashiro H."/>
            <person name="Tanigami A."/>
            <person name="Fujiwara T."/>
            <person name="Ono T."/>
            <person name="Yamada K."/>
            <person name="Fujii Y."/>
            <person name="Ozaki K."/>
            <person name="Hirao M."/>
            <person name="Ohmori Y."/>
            <person name="Kawabata A."/>
            <person name="Hikiji T."/>
            <person name="Kobatake N."/>
            <person name="Inagaki H."/>
            <person name="Ikema Y."/>
            <person name="Okamoto S."/>
            <person name="Okitani R."/>
            <person name="Kawakami T."/>
            <person name="Noguchi S."/>
            <person name="Itoh T."/>
            <person name="Shigeta K."/>
            <person name="Senba T."/>
            <person name="Matsumura K."/>
            <person name="Nakajima Y."/>
            <person name="Mizuno T."/>
            <person name="Morinaga M."/>
            <person name="Sasaki M."/>
            <person name="Togashi T."/>
            <person name="Oyama M."/>
            <person name="Hata H."/>
            <person name="Watanabe M."/>
            <person name="Komatsu T."/>
            <person name="Mizushima-Sugano J."/>
            <person name="Satoh T."/>
            <person name="Shirai Y."/>
            <person name="Takahashi Y."/>
            <person name="Nakagawa K."/>
            <person name="Okumura K."/>
            <person name="Nagase T."/>
            <person name="Nomura N."/>
            <person name="Kikuchi H."/>
            <person name="Masuho Y."/>
            <person name="Yamashita R."/>
            <person name="Nakai K."/>
            <person name="Yada T."/>
            <person name="Nakamura Y."/>
            <person name="Ohara O."/>
            <person name="Isogai T."/>
            <person name="Sugano S."/>
        </authorList>
    </citation>
    <scope>NUCLEOTIDE SEQUENCE [LARGE SCALE MRNA] (ISOFORMS 1; 2; 3 AND 4)</scope>
    <scope>VARIANT HIS-87</scope>
    <source>
        <tissue>Placenta</tissue>
        <tissue>Teratocarcinoma</tissue>
        <tissue>Testis</tissue>
        <tissue>Thalamus</tissue>
        <tissue>Thymus</tissue>
    </source>
</reference>
<reference key="4">
    <citation type="submission" date="2004-06" db="EMBL/GenBank/DDBJ databases">
        <title>Cloning of human full open reading frames in Gateway(TM) system entry vector (pDONR201).</title>
        <authorList>
            <person name="Ebert L."/>
            <person name="Schick M."/>
            <person name="Neubert P."/>
            <person name="Schatten R."/>
            <person name="Henze S."/>
            <person name="Korn B."/>
        </authorList>
    </citation>
    <scope>NUCLEOTIDE SEQUENCE [LARGE SCALE MRNA] (ISOFORM 1)</scope>
    <scope>VARIANT HIS-87</scope>
</reference>
<reference key="5">
    <citation type="journal article" date="2006" name="Nature">
        <title>The DNA sequence, annotation and analysis of human chromosome 3.</title>
        <authorList>
            <person name="Muzny D.M."/>
            <person name="Scherer S.E."/>
            <person name="Kaul R."/>
            <person name="Wang J."/>
            <person name="Yu J."/>
            <person name="Sudbrak R."/>
            <person name="Buhay C.J."/>
            <person name="Chen R."/>
            <person name="Cree A."/>
            <person name="Ding Y."/>
            <person name="Dugan-Rocha S."/>
            <person name="Gill R."/>
            <person name="Gunaratne P."/>
            <person name="Harris R.A."/>
            <person name="Hawes A.C."/>
            <person name="Hernandez J."/>
            <person name="Hodgson A.V."/>
            <person name="Hume J."/>
            <person name="Jackson A."/>
            <person name="Khan Z.M."/>
            <person name="Kovar-Smith C."/>
            <person name="Lewis L.R."/>
            <person name="Lozado R.J."/>
            <person name="Metzker M.L."/>
            <person name="Milosavljevic A."/>
            <person name="Miner G.R."/>
            <person name="Morgan M.B."/>
            <person name="Nazareth L.V."/>
            <person name="Scott G."/>
            <person name="Sodergren E."/>
            <person name="Song X.-Z."/>
            <person name="Steffen D."/>
            <person name="Wei S."/>
            <person name="Wheeler D.A."/>
            <person name="Wright M.W."/>
            <person name="Worley K.C."/>
            <person name="Yuan Y."/>
            <person name="Zhang Z."/>
            <person name="Adams C.Q."/>
            <person name="Ansari-Lari M.A."/>
            <person name="Ayele M."/>
            <person name="Brown M.J."/>
            <person name="Chen G."/>
            <person name="Chen Z."/>
            <person name="Clendenning J."/>
            <person name="Clerc-Blankenburg K.P."/>
            <person name="Chen R."/>
            <person name="Chen Z."/>
            <person name="Davis C."/>
            <person name="Delgado O."/>
            <person name="Dinh H.H."/>
            <person name="Dong W."/>
            <person name="Draper H."/>
            <person name="Ernst S."/>
            <person name="Fu G."/>
            <person name="Gonzalez-Garay M.L."/>
            <person name="Garcia D.K."/>
            <person name="Gillett W."/>
            <person name="Gu J."/>
            <person name="Hao B."/>
            <person name="Haugen E."/>
            <person name="Havlak P."/>
            <person name="He X."/>
            <person name="Hennig S."/>
            <person name="Hu S."/>
            <person name="Huang W."/>
            <person name="Jackson L.R."/>
            <person name="Jacob L.S."/>
            <person name="Kelly S.H."/>
            <person name="Kube M."/>
            <person name="Levy R."/>
            <person name="Li Z."/>
            <person name="Liu B."/>
            <person name="Liu J."/>
            <person name="Liu W."/>
            <person name="Lu J."/>
            <person name="Maheshwari M."/>
            <person name="Nguyen B.-V."/>
            <person name="Okwuonu G.O."/>
            <person name="Palmeiri A."/>
            <person name="Pasternak S."/>
            <person name="Perez L.M."/>
            <person name="Phelps K.A."/>
            <person name="Plopper F.J."/>
            <person name="Qiang B."/>
            <person name="Raymond C."/>
            <person name="Rodriguez R."/>
            <person name="Saenphimmachak C."/>
            <person name="Santibanez J."/>
            <person name="Shen H."/>
            <person name="Shen Y."/>
            <person name="Subramanian S."/>
            <person name="Tabor P.E."/>
            <person name="Verduzco D."/>
            <person name="Waldron L."/>
            <person name="Wang J."/>
            <person name="Wang J."/>
            <person name="Wang Q."/>
            <person name="Williams G.A."/>
            <person name="Wong G.K.-S."/>
            <person name="Yao Z."/>
            <person name="Zhang J."/>
            <person name="Zhang X."/>
            <person name="Zhao G."/>
            <person name="Zhou J."/>
            <person name="Zhou Y."/>
            <person name="Nelson D."/>
            <person name="Lehrach H."/>
            <person name="Reinhardt R."/>
            <person name="Naylor S.L."/>
            <person name="Yang H."/>
            <person name="Olson M."/>
            <person name="Weinstock G."/>
            <person name="Gibbs R.A."/>
        </authorList>
    </citation>
    <scope>NUCLEOTIDE SEQUENCE [LARGE SCALE GENOMIC DNA]</scope>
</reference>
<reference key="6">
    <citation type="submission" date="2005-07" db="EMBL/GenBank/DDBJ databases">
        <authorList>
            <person name="Mural R.J."/>
            <person name="Istrail S."/>
            <person name="Sutton G.G."/>
            <person name="Florea L."/>
            <person name="Halpern A.L."/>
            <person name="Mobarry C.M."/>
            <person name="Lippert R."/>
            <person name="Walenz B."/>
            <person name="Shatkay H."/>
            <person name="Dew I."/>
            <person name="Miller J.R."/>
            <person name="Flanigan M.J."/>
            <person name="Edwards N.J."/>
            <person name="Bolanos R."/>
            <person name="Fasulo D."/>
            <person name="Halldorsson B.V."/>
            <person name="Hannenhalli S."/>
            <person name="Turner R."/>
            <person name="Yooseph S."/>
            <person name="Lu F."/>
            <person name="Nusskern D.R."/>
            <person name="Shue B.C."/>
            <person name="Zheng X.H."/>
            <person name="Zhong F."/>
            <person name="Delcher A.L."/>
            <person name="Huson D.H."/>
            <person name="Kravitz S.A."/>
            <person name="Mouchard L."/>
            <person name="Reinert K."/>
            <person name="Remington K.A."/>
            <person name="Clark A.G."/>
            <person name="Waterman M.S."/>
            <person name="Eichler E.E."/>
            <person name="Adams M.D."/>
            <person name="Hunkapiller M.W."/>
            <person name="Myers E.W."/>
            <person name="Venter J.C."/>
        </authorList>
    </citation>
    <scope>NUCLEOTIDE SEQUENCE [LARGE SCALE GENOMIC DNA]</scope>
</reference>
<reference key="7">
    <citation type="journal article" date="2004" name="Genome Res.">
        <title>The status, quality, and expansion of the NIH full-length cDNA project: the Mammalian Gene Collection (MGC).</title>
        <authorList>
            <consortium name="The MGC Project Team"/>
        </authorList>
    </citation>
    <scope>NUCLEOTIDE SEQUENCE [LARGE SCALE MRNA] (ISOFORM 1)</scope>
    <scope>VARIANT HIS-87</scope>
    <source>
        <tissue>Testis</tissue>
    </source>
</reference>
<reference key="8">
    <citation type="journal article" date="2006" name="Cell">
        <title>Global, in vivo, and site-specific phosphorylation dynamics in signaling networks.</title>
        <authorList>
            <person name="Olsen J.V."/>
            <person name="Blagoev B."/>
            <person name="Gnad F."/>
            <person name="Macek B."/>
            <person name="Kumar C."/>
            <person name="Mortensen P."/>
            <person name="Mann M."/>
        </authorList>
    </citation>
    <scope>IDENTIFICATION BY MASS SPECTROMETRY [LARGE SCALE ANALYSIS]</scope>
    <source>
        <tissue>Cervix carcinoma</tissue>
    </source>
</reference>
<reference key="9">
    <citation type="journal article" date="2008" name="Mol. Cell">
        <title>Kinase-selective enrichment enables quantitative phosphoproteomics of the kinome across the cell cycle.</title>
        <authorList>
            <person name="Daub H."/>
            <person name="Olsen J.V."/>
            <person name="Bairlein M."/>
            <person name="Gnad F."/>
            <person name="Oppermann F.S."/>
            <person name="Korner R."/>
            <person name="Greff Z."/>
            <person name="Keri G."/>
            <person name="Stemmann O."/>
            <person name="Mann M."/>
        </authorList>
    </citation>
    <scope>IDENTIFICATION BY MASS SPECTROMETRY [LARGE SCALE ANALYSIS]</scope>
    <source>
        <tissue>Cervix carcinoma</tissue>
    </source>
</reference>
<reference key="10">
    <citation type="journal article" date="2009" name="Anal. Chem.">
        <title>Lys-N and trypsin cover complementary parts of the phosphoproteome in a refined SCX-based approach.</title>
        <authorList>
            <person name="Gauci S."/>
            <person name="Helbig A.O."/>
            <person name="Slijper M."/>
            <person name="Krijgsveld J."/>
            <person name="Heck A.J."/>
            <person name="Mohammed S."/>
        </authorList>
    </citation>
    <scope>ACETYLATION [LARGE SCALE ANALYSIS] AT MET-1</scope>
    <scope>IDENTIFICATION BY MASS SPECTROMETRY [LARGE SCALE ANALYSIS]</scope>
</reference>
<reference key="11">
    <citation type="journal article" date="2009" name="Curr. Biol.">
        <title>UIF, a new mRNA export adaptor that works together with REF/ALY, requires FACT for recruitment to mRNA.</title>
        <authorList>
            <person name="Hautbergue G.M."/>
            <person name="Hung M.L."/>
            <person name="Walsh M.J."/>
            <person name="Snijders A.P."/>
            <person name="Chang C.T."/>
            <person name="Jones R."/>
            <person name="Ponting C.P."/>
            <person name="Dickman M.J."/>
            <person name="Wilson S.A."/>
        </authorList>
    </citation>
    <scope>FUNCTION</scope>
    <scope>SUBCELLULAR LOCATION</scope>
    <scope>RNA-BINDING</scope>
    <scope>INTERACTION WITH DDX39B; NXF1 AND SSRP1</scope>
</reference>
<reference key="12">
    <citation type="journal article" date="2010" name="J. Biol. Chem.">
        <title>In vivo identification of sumoylation sites by a signature tag and cysteine-targeted affinity purification.</title>
        <authorList>
            <person name="Blomster H.A."/>
            <person name="Imanishi S.Y."/>
            <person name="Siimes J."/>
            <person name="Kastu J."/>
            <person name="Morrice N.A."/>
            <person name="Eriksson J.E."/>
            <person name="Sistonen L."/>
        </authorList>
    </citation>
    <scope>SUMOYLATION AT LYS-140</scope>
    <source>
        <tissue>Cervix carcinoma</tissue>
    </source>
</reference>
<reference key="13">
    <citation type="journal article" date="2011" name="BMC Syst. Biol.">
        <title>Initial characterization of the human central proteome.</title>
        <authorList>
            <person name="Burkard T.R."/>
            <person name="Planyavsky M."/>
            <person name="Kaupe I."/>
            <person name="Breitwieser F.P."/>
            <person name="Buerckstuemmer T."/>
            <person name="Bennett K.L."/>
            <person name="Superti-Furga G."/>
            <person name="Colinge J."/>
        </authorList>
    </citation>
    <scope>IDENTIFICATION BY MASS SPECTROMETRY [LARGE SCALE ANALYSIS]</scope>
</reference>
<reference key="14">
    <citation type="journal article" date="2011" name="Sci. Signal.">
        <title>System-wide temporal characterization of the proteome and phosphoproteome of human embryonic stem cell differentiation.</title>
        <authorList>
            <person name="Rigbolt K.T."/>
            <person name="Prokhorova T.A."/>
            <person name="Akimov V."/>
            <person name="Henningsen J."/>
            <person name="Johansen P.T."/>
            <person name="Kratchmarova I."/>
            <person name="Kassem M."/>
            <person name="Mann M."/>
            <person name="Olsen J.V."/>
            <person name="Blagoev B."/>
        </authorList>
    </citation>
    <scope>PHOSPHORYLATION [LARGE SCALE ANALYSIS] AT SER-23</scope>
    <scope>IDENTIFICATION BY MASS SPECTROMETRY [LARGE SCALE ANALYSIS]</scope>
</reference>
<reference key="15">
    <citation type="journal article" date="2013" name="J. Proteome Res.">
        <title>Toward a comprehensive characterization of a human cancer cell phosphoproteome.</title>
        <authorList>
            <person name="Zhou H."/>
            <person name="Di Palma S."/>
            <person name="Preisinger C."/>
            <person name="Peng M."/>
            <person name="Polat A.N."/>
            <person name="Heck A.J."/>
            <person name="Mohammed S."/>
        </authorList>
    </citation>
    <scope>PHOSPHORYLATION [LARGE SCALE ANALYSIS] AT SER-16; SER-61 AND SER-118</scope>
    <scope>IDENTIFICATION BY MASS SPECTROMETRY [LARGE SCALE ANALYSIS]</scope>
    <source>
        <tissue>Cervix carcinoma</tissue>
        <tissue>Erythroleukemia</tissue>
    </source>
</reference>
<reference key="16">
    <citation type="journal article" date="2014" name="J. Proteomics">
        <title>An enzyme assisted RP-RPLC approach for in-depth analysis of human liver phosphoproteome.</title>
        <authorList>
            <person name="Bian Y."/>
            <person name="Song C."/>
            <person name="Cheng K."/>
            <person name="Dong M."/>
            <person name="Wang F."/>
            <person name="Huang J."/>
            <person name="Sun D."/>
            <person name="Wang L."/>
            <person name="Ye M."/>
            <person name="Zou H."/>
        </authorList>
    </citation>
    <scope>IDENTIFICATION BY MASS SPECTROMETRY [LARGE SCALE ANALYSIS]</scope>
    <source>
        <tissue>Liver</tissue>
    </source>
</reference>
<reference key="17">
    <citation type="journal article" date="2015" name="Mol. Cell. Proteomics">
        <title>System-wide analysis of SUMOylation dynamics in response to replication stress reveals novel small ubiquitin-like modified target proteins and acceptor lysines relevant for genome stability.</title>
        <authorList>
            <person name="Xiao Z."/>
            <person name="Chang J.G."/>
            <person name="Hendriks I.A."/>
            <person name="Sigurdsson J.O."/>
            <person name="Olsen J.V."/>
            <person name="Vertegaal A.C."/>
        </authorList>
    </citation>
    <scope>SUMOYLATION [LARGE SCALE ANALYSIS] AT LYS-261</scope>
    <scope>IDENTIFICATION BY MASS SPECTROMETRY [LARGE SCALE ANALYSIS]</scope>
</reference>
<reference key="18">
    <citation type="journal article" date="2015" name="Nucleic Acids Res.">
        <title>Luzp4 defines a new mRNA export pathway in cancer cells.</title>
        <authorList>
            <person name="Viphakone N."/>
            <person name="Cumberbatch M.G."/>
            <person name="Livingstone M.J."/>
            <person name="Heath P.R."/>
            <person name="Dickman M.J."/>
            <person name="Catto J.W."/>
            <person name="Wilson S.A."/>
        </authorList>
    </citation>
    <scope>TISSUE SPECIFICITY</scope>
</reference>
<reference key="19">
    <citation type="journal article" date="2017" name="Nat. Struct. Mol. Biol.">
        <title>Site-specific mapping of the human SUMO proteome reveals co-modification with phosphorylation.</title>
        <authorList>
            <person name="Hendriks I.A."/>
            <person name="Lyon D."/>
            <person name="Young C."/>
            <person name="Jensen L.J."/>
            <person name="Vertegaal A.C."/>
            <person name="Nielsen M.L."/>
        </authorList>
    </citation>
    <scope>SUMOYLATION [LARGE SCALE ANALYSIS] AT LYS-261</scope>
    <scope>IDENTIFICATION BY MASS SPECTROMETRY [LARGE SCALE ANALYSIS]</scope>
</reference>
<organism>
    <name type="scientific">Homo sapiens</name>
    <name type="common">Human</name>
    <dbReference type="NCBI Taxonomy" id="9606"/>
    <lineage>
        <taxon>Eukaryota</taxon>
        <taxon>Metazoa</taxon>
        <taxon>Chordata</taxon>
        <taxon>Craniata</taxon>
        <taxon>Vertebrata</taxon>
        <taxon>Euteleostomi</taxon>
        <taxon>Mammalia</taxon>
        <taxon>Eutheria</taxon>
        <taxon>Euarchontoglires</taxon>
        <taxon>Primates</taxon>
        <taxon>Haplorrhini</taxon>
        <taxon>Catarrhini</taxon>
        <taxon>Hominidae</taxon>
        <taxon>Homo</taxon>
    </lineage>
</organism>
<sequence>MNRFGTRLVGATATSSPPPKARSNENLDKIDMSLDDIIKLNRKEGKKQNFPRLNRRLLQQSGAQQFRMRVRWGIQQNSGFGKTSLNRRGRVMPGKRRPNGVITGLAARKTTGIRKGISPMNRPPLSDKNIEQYFPVLKRKANLLRQNEGQRKPVAVLKRPSQLSRKNNIPANFTRSGNKLNHQKDTRQATFLFRRGLKVQAQLNTEQLLDDVVAKRTRQWRTSTTNGGILTVSIDNPGAVQCPVTQKPRLTRTAVPSFLTKREQSDVKKVPKGVPLQFDINSVGKQTGMTLNERFGILKEQRATLTYNKGGSRFVTVG</sequence>
<evidence type="ECO:0000250" key="1"/>
<evidence type="ECO:0000250" key="2">
    <source>
        <dbReference type="UniProtKB" id="Q91Z49"/>
    </source>
</evidence>
<evidence type="ECO:0000256" key="3">
    <source>
        <dbReference type="SAM" id="MobiDB-lite"/>
    </source>
</evidence>
<evidence type="ECO:0000269" key="4">
    <source>
    </source>
</evidence>
<evidence type="ECO:0000269" key="5">
    <source>
    </source>
</evidence>
<evidence type="ECO:0000269" key="6">
    <source>
    </source>
</evidence>
<evidence type="ECO:0000269" key="7">
    <source>
    </source>
</evidence>
<evidence type="ECO:0000269" key="8">
    <source>
    </source>
</evidence>
<evidence type="ECO:0000269" key="9">
    <source ref="4"/>
</evidence>
<evidence type="ECO:0000303" key="10">
    <source>
    </source>
</evidence>
<evidence type="ECO:0000305" key="11"/>
<evidence type="ECO:0007744" key="12">
    <source>
    </source>
</evidence>
<evidence type="ECO:0007744" key="13">
    <source>
    </source>
</evidence>
<evidence type="ECO:0007744" key="14">
    <source>
    </source>
</evidence>
<evidence type="ECO:0007744" key="15">
    <source>
    </source>
</evidence>
<evidence type="ECO:0007744" key="16">
    <source>
    </source>
</evidence>
<gene>
    <name type="primary">FYTTD1</name>
    <name type="synonym">UIF</name>
</gene>
<dbReference type="EMBL" id="AJ344094">
    <property type="protein sequence ID" value="CAC51432.1"/>
    <property type="molecule type" value="mRNA"/>
</dbReference>
<dbReference type="EMBL" id="AL136558">
    <property type="protein sequence ID" value="CAB66493.1"/>
    <property type="molecule type" value="mRNA"/>
</dbReference>
<dbReference type="EMBL" id="AK027672">
    <property type="protein sequence ID" value="BAB55284.1"/>
    <property type="molecule type" value="mRNA"/>
</dbReference>
<dbReference type="EMBL" id="AK296283">
    <property type="protein sequence ID" value="BAH12300.1"/>
    <property type="molecule type" value="mRNA"/>
</dbReference>
<dbReference type="EMBL" id="AK302546">
    <property type="protein sequence ID" value="BAH13737.1"/>
    <property type="molecule type" value="mRNA"/>
</dbReference>
<dbReference type="EMBL" id="AK303462">
    <property type="protein sequence ID" value="BAH13966.1"/>
    <property type="molecule type" value="mRNA"/>
</dbReference>
<dbReference type="EMBL" id="AK315019">
    <property type="protein sequence ID" value="BAG37509.1"/>
    <property type="molecule type" value="mRNA"/>
</dbReference>
<dbReference type="EMBL" id="AK316308">
    <property type="protein sequence ID" value="BAH14679.1"/>
    <property type="molecule type" value="mRNA"/>
</dbReference>
<dbReference type="EMBL" id="CR533502">
    <property type="protein sequence ID" value="CAG38533.1"/>
    <property type="molecule type" value="mRNA"/>
</dbReference>
<dbReference type="EMBL" id="AC024560">
    <property type="status" value="NOT_ANNOTATED_CDS"/>
    <property type="molecule type" value="Genomic_DNA"/>
</dbReference>
<dbReference type="EMBL" id="AC055764">
    <property type="status" value="NOT_ANNOTATED_CDS"/>
    <property type="molecule type" value="Genomic_DNA"/>
</dbReference>
<dbReference type="EMBL" id="CH471252">
    <property type="protein sequence ID" value="EAW92240.1"/>
    <property type="molecule type" value="Genomic_DNA"/>
</dbReference>
<dbReference type="EMBL" id="BC035006">
    <property type="protein sequence ID" value="AAH35006.1"/>
    <property type="molecule type" value="mRNA"/>
</dbReference>
<dbReference type="EMBL" id="BC039734">
    <property type="protein sequence ID" value="AAH39734.1"/>
    <property type="molecule type" value="mRNA"/>
</dbReference>
<dbReference type="CCDS" id="CCDS3329.1">
    <molecule id="Q96QD9-1"/>
</dbReference>
<dbReference type="CCDS" id="CCDS43196.2">
    <molecule id="Q96QD9-2"/>
</dbReference>
<dbReference type="RefSeq" id="NP_001011537.2">
    <molecule id="Q96QD9-2"/>
    <property type="nucleotide sequence ID" value="NM_001011537.3"/>
</dbReference>
<dbReference type="RefSeq" id="NP_115664.2">
    <molecule id="Q96QD9-1"/>
    <property type="nucleotide sequence ID" value="NM_032288.6"/>
</dbReference>
<dbReference type="BioGRID" id="123976">
    <property type="interactions" value="165"/>
</dbReference>
<dbReference type="ComplexPortal" id="CPX-2488">
    <property type="entry name" value="TREX transcription-export complex, DX39B variant"/>
</dbReference>
<dbReference type="ComplexPortal" id="CPX-7261">
    <property type="entry name" value="TREX transcription-export complex, DX39A variant"/>
</dbReference>
<dbReference type="DIP" id="DIP-62119N"/>
<dbReference type="FunCoup" id="Q96QD9">
    <property type="interactions" value="2137"/>
</dbReference>
<dbReference type="IntAct" id="Q96QD9">
    <property type="interactions" value="112"/>
</dbReference>
<dbReference type="MINT" id="Q96QD9"/>
<dbReference type="STRING" id="9606.ENSP00000241502"/>
<dbReference type="TCDB" id="3.A.22.1.2">
    <property type="family name" value="the transcription-coupled trex/tap nuclear mrna export complex (trex) family"/>
</dbReference>
<dbReference type="GlyGen" id="Q96QD9">
    <property type="glycosylation" value="1 site"/>
</dbReference>
<dbReference type="iPTMnet" id="Q96QD9"/>
<dbReference type="PhosphoSitePlus" id="Q96QD9"/>
<dbReference type="SwissPalm" id="Q96QD9"/>
<dbReference type="BioMuta" id="FYTTD1"/>
<dbReference type="DMDM" id="284018159"/>
<dbReference type="jPOST" id="Q96QD9"/>
<dbReference type="MassIVE" id="Q96QD9"/>
<dbReference type="PaxDb" id="9606-ENSP00000241502"/>
<dbReference type="PeptideAtlas" id="Q96QD9"/>
<dbReference type="ProteomicsDB" id="77857">
    <molecule id="Q96QD9-1"/>
</dbReference>
<dbReference type="ProteomicsDB" id="77858">
    <molecule id="Q96QD9-2"/>
</dbReference>
<dbReference type="ProteomicsDB" id="77859">
    <molecule id="Q96QD9-3"/>
</dbReference>
<dbReference type="ProteomicsDB" id="77860">
    <molecule id="Q96QD9-4"/>
</dbReference>
<dbReference type="Pumba" id="Q96QD9"/>
<dbReference type="TopDownProteomics" id="Q96QD9-1">
    <molecule id="Q96QD9-1"/>
</dbReference>
<dbReference type="Antibodypedia" id="54015">
    <property type="antibodies" value="140 antibodies from 21 providers"/>
</dbReference>
<dbReference type="DNASU" id="84248"/>
<dbReference type="Ensembl" id="ENST00000241502.9">
    <molecule id="Q96QD9-1"/>
    <property type="protein sequence ID" value="ENSP00000241502.3"/>
    <property type="gene ID" value="ENSG00000122068.13"/>
</dbReference>
<dbReference type="Ensembl" id="ENST00000415708.6">
    <molecule id="Q96QD9-2"/>
    <property type="protein sequence ID" value="ENSP00000393746.2"/>
    <property type="gene ID" value="ENSG00000122068.13"/>
</dbReference>
<dbReference type="Ensembl" id="ENST00000418169.5">
    <molecule id="Q96QD9-4"/>
    <property type="protein sequence ID" value="ENSP00000400191.1"/>
    <property type="gene ID" value="ENSG00000122068.13"/>
</dbReference>
<dbReference type="Ensembl" id="ENST00000424384.2">
    <molecule id="Q96QD9-3"/>
    <property type="protein sequence ID" value="ENSP00000394631.2"/>
    <property type="gene ID" value="ENSG00000122068.13"/>
</dbReference>
<dbReference type="GeneID" id="84248"/>
<dbReference type="KEGG" id="hsa:84248"/>
<dbReference type="MANE-Select" id="ENST00000241502.9">
    <property type="protein sequence ID" value="ENSP00000241502.3"/>
    <property type="RefSeq nucleotide sequence ID" value="NM_032288.7"/>
    <property type="RefSeq protein sequence ID" value="NP_115664.2"/>
</dbReference>
<dbReference type="UCSC" id="uc003fyi.3">
    <molecule id="Q96QD9-1"/>
    <property type="organism name" value="human"/>
</dbReference>
<dbReference type="AGR" id="HGNC:25407"/>
<dbReference type="CTD" id="84248"/>
<dbReference type="GeneCards" id="FYTTD1"/>
<dbReference type="HGNC" id="HGNC:25407">
    <property type="gene designation" value="FYTTD1"/>
</dbReference>
<dbReference type="HPA" id="ENSG00000122068">
    <property type="expression patterns" value="Low tissue specificity"/>
</dbReference>
<dbReference type="MIM" id="616933">
    <property type="type" value="gene"/>
</dbReference>
<dbReference type="neXtProt" id="NX_Q96QD9"/>
<dbReference type="OpenTargets" id="ENSG00000122068"/>
<dbReference type="PharmGKB" id="PA134946373"/>
<dbReference type="VEuPathDB" id="HostDB:ENSG00000122068"/>
<dbReference type="eggNOG" id="ENOG502QWD4">
    <property type="taxonomic scope" value="Eukaryota"/>
</dbReference>
<dbReference type="GeneTree" id="ENSGT00390000012807"/>
<dbReference type="HOGENOM" id="CLU_1948055_0_0_1"/>
<dbReference type="InParanoid" id="Q96QD9"/>
<dbReference type="OMA" id="NGTRQFR"/>
<dbReference type="OrthoDB" id="9938627at2759"/>
<dbReference type="PAN-GO" id="Q96QD9">
    <property type="GO annotations" value="3 GO annotations based on evolutionary models"/>
</dbReference>
<dbReference type="PhylomeDB" id="Q96QD9"/>
<dbReference type="TreeFam" id="TF336232"/>
<dbReference type="PathwayCommons" id="Q96QD9"/>
<dbReference type="Reactome" id="R-HSA-159236">
    <property type="pathway name" value="Transport of Mature mRNA derived from an Intron-Containing Transcript"/>
</dbReference>
<dbReference type="Reactome" id="R-HSA-72187">
    <property type="pathway name" value="mRNA 3'-end processing"/>
</dbReference>
<dbReference type="Reactome" id="R-HSA-73856">
    <property type="pathway name" value="RNA Polymerase II Transcription Termination"/>
</dbReference>
<dbReference type="SignaLink" id="Q96QD9"/>
<dbReference type="BioGRID-ORCS" id="84248">
    <property type="hits" value="8 hits in 1152 CRISPR screens"/>
</dbReference>
<dbReference type="CD-CODE" id="804901D1">
    <property type="entry name" value="Nuclear speckle"/>
</dbReference>
<dbReference type="ChiTaRS" id="FYTTD1">
    <property type="organism name" value="human"/>
</dbReference>
<dbReference type="GenomeRNAi" id="84248"/>
<dbReference type="Pharos" id="Q96QD9">
    <property type="development level" value="Tbio"/>
</dbReference>
<dbReference type="PRO" id="PR:Q96QD9"/>
<dbReference type="Proteomes" id="UP000005640">
    <property type="component" value="Chromosome 3"/>
</dbReference>
<dbReference type="RNAct" id="Q96QD9">
    <property type="molecule type" value="protein"/>
</dbReference>
<dbReference type="Bgee" id="ENSG00000122068">
    <property type="expression patterns" value="Expressed in tibialis anterior and 193 other cell types or tissues"/>
</dbReference>
<dbReference type="ExpressionAtlas" id="Q96QD9">
    <property type="expression patterns" value="baseline and differential"/>
</dbReference>
<dbReference type="GO" id="GO:0005829">
    <property type="term" value="C:cytosol"/>
    <property type="evidence" value="ECO:0000314"/>
    <property type="project" value="HPA"/>
</dbReference>
<dbReference type="GO" id="GO:0016607">
    <property type="term" value="C:nuclear speck"/>
    <property type="evidence" value="ECO:0000314"/>
    <property type="project" value="HPA"/>
</dbReference>
<dbReference type="GO" id="GO:0005730">
    <property type="term" value="C:nucleolus"/>
    <property type="evidence" value="ECO:0000314"/>
    <property type="project" value="HPA"/>
</dbReference>
<dbReference type="GO" id="GO:0005654">
    <property type="term" value="C:nucleoplasm"/>
    <property type="evidence" value="ECO:0000314"/>
    <property type="project" value="HPA"/>
</dbReference>
<dbReference type="GO" id="GO:0003729">
    <property type="term" value="F:mRNA binding"/>
    <property type="evidence" value="ECO:0000314"/>
    <property type="project" value="UniProtKB"/>
</dbReference>
<dbReference type="GO" id="GO:0003723">
    <property type="term" value="F:RNA binding"/>
    <property type="evidence" value="ECO:0007005"/>
    <property type="project" value="UniProtKB"/>
</dbReference>
<dbReference type="GO" id="GO:0006406">
    <property type="term" value="P:mRNA export from nucleus"/>
    <property type="evidence" value="ECO:0000315"/>
    <property type="project" value="UniProtKB"/>
</dbReference>
<dbReference type="InterPro" id="IPR009782">
    <property type="entry name" value="FYTTD1"/>
</dbReference>
<dbReference type="PANTHER" id="PTHR21038">
    <property type="entry name" value="40-2-3 PROTEIN-RELATED"/>
    <property type="match status" value="1"/>
</dbReference>
<dbReference type="PANTHER" id="PTHR21038:SF2">
    <property type="entry name" value="UAP56-INTERACTING FACTOR"/>
    <property type="match status" value="1"/>
</dbReference>
<dbReference type="Pfam" id="PF07078">
    <property type="entry name" value="FYTT"/>
    <property type="match status" value="1"/>
</dbReference>